<keyword id="KW-1003">Cell membrane</keyword>
<keyword id="KW-0449">Lipoprotein</keyword>
<keyword id="KW-0472">Membrane</keyword>
<keyword id="KW-0564">Palmitate</keyword>
<keyword id="KW-1185">Reference proteome</keyword>
<keyword id="KW-0732">Signal</keyword>
<protein>
    <recommendedName>
        <fullName>Uncharacterized lipoprotein YgdI</fullName>
    </recommendedName>
</protein>
<name>YGDI_ECOLI</name>
<dbReference type="EMBL" id="U29581">
    <property type="protein sequence ID" value="AAB40459.1"/>
    <property type="status" value="ALT_INIT"/>
    <property type="molecule type" value="Genomic_DNA"/>
</dbReference>
<dbReference type="EMBL" id="U00096">
    <property type="protein sequence ID" value="AAC75851.2"/>
    <property type="molecule type" value="Genomic_DNA"/>
</dbReference>
<dbReference type="EMBL" id="AP009048">
    <property type="protein sequence ID" value="BAE76881.1"/>
    <property type="molecule type" value="Genomic_DNA"/>
</dbReference>
<dbReference type="RefSeq" id="NP_417289.2">
    <property type="nucleotide sequence ID" value="NC_000913.3"/>
</dbReference>
<dbReference type="RefSeq" id="WP_000750398.1">
    <property type="nucleotide sequence ID" value="NZ_STEB01000030.1"/>
</dbReference>
<dbReference type="SMR" id="P65292"/>
<dbReference type="BioGRID" id="4261125">
    <property type="interactions" value="10"/>
</dbReference>
<dbReference type="BioGRID" id="851606">
    <property type="interactions" value="1"/>
</dbReference>
<dbReference type="DIP" id="DIP-48041N"/>
<dbReference type="FunCoup" id="P65292">
    <property type="interactions" value="31"/>
</dbReference>
<dbReference type="IntAct" id="P65292">
    <property type="interactions" value="2"/>
</dbReference>
<dbReference type="STRING" id="511145.b2809"/>
<dbReference type="jPOST" id="P65292"/>
<dbReference type="PaxDb" id="511145-b2809"/>
<dbReference type="EnsemblBacteria" id="AAC75851">
    <property type="protein sequence ID" value="AAC75851"/>
    <property type="gene ID" value="b2809"/>
</dbReference>
<dbReference type="GeneID" id="947276"/>
<dbReference type="KEGG" id="ecj:JW5448"/>
<dbReference type="KEGG" id="eco:b2809"/>
<dbReference type="KEGG" id="ecoc:C3026_15440"/>
<dbReference type="PATRIC" id="fig|511145.12.peg.2909"/>
<dbReference type="EchoBASE" id="EB2890"/>
<dbReference type="eggNOG" id="ENOG5032RSI">
    <property type="taxonomic scope" value="Bacteria"/>
</dbReference>
<dbReference type="HOGENOM" id="CLU_182841_0_1_6"/>
<dbReference type="InParanoid" id="P65292"/>
<dbReference type="OMA" id="GHHQQIN"/>
<dbReference type="OrthoDB" id="6520455at2"/>
<dbReference type="PhylomeDB" id="P65292"/>
<dbReference type="BioCyc" id="EcoCyc:G7453-MONOMER"/>
<dbReference type="PRO" id="PR:P65292"/>
<dbReference type="Proteomes" id="UP000000625">
    <property type="component" value="Chromosome"/>
</dbReference>
<dbReference type="GO" id="GO:0005886">
    <property type="term" value="C:plasma membrane"/>
    <property type="evidence" value="ECO:0007669"/>
    <property type="project" value="UniProtKB-SubCell"/>
</dbReference>
<dbReference type="Gene3D" id="2.30.30.100">
    <property type="match status" value="1"/>
</dbReference>
<dbReference type="InterPro" id="IPR010920">
    <property type="entry name" value="LSM_dom_sf"/>
</dbReference>
<dbReference type="InterPro" id="IPR010305">
    <property type="entry name" value="YgdI/YgdR-like"/>
</dbReference>
<dbReference type="InterPro" id="IPR047807">
    <property type="entry name" value="YgdI/YgdR-like_SH3-like"/>
</dbReference>
<dbReference type="NCBIfam" id="NF033216">
    <property type="entry name" value="lipo_YgdI_YgdR"/>
    <property type="match status" value="1"/>
</dbReference>
<dbReference type="PANTHER" id="PTHR37011:SF2">
    <property type="entry name" value="LIPOPROTEIN"/>
    <property type="match status" value="1"/>
</dbReference>
<dbReference type="PANTHER" id="PTHR37011">
    <property type="entry name" value="POT FAMILY PEPTIDE TRANSPORT PROTEIN-RELATED"/>
    <property type="match status" value="1"/>
</dbReference>
<dbReference type="Pfam" id="PF06004">
    <property type="entry name" value="DUF903"/>
    <property type="match status" value="1"/>
</dbReference>
<dbReference type="SUPFAM" id="SSF50182">
    <property type="entry name" value="Sm-like ribonucleoproteins"/>
    <property type="match status" value="1"/>
</dbReference>
<dbReference type="PROSITE" id="PS51257">
    <property type="entry name" value="PROKAR_LIPOPROTEIN"/>
    <property type="match status" value="1"/>
</dbReference>
<reference key="1">
    <citation type="journal article" date="1997" name="Science">
        <title>The complete genome sequence of Escherichia coli K-12.</title>
        <authorList>
            <person name="Blattner F.R."/>
            <person name="Plunkett G. III"/>
            <person name="Bloch C.A."/>
            <person name="Perna N.T."/>
            <person name="Burland V."/>
            <person name="Riley M."/>
            <person name="Collado-Vides J."/>
            <person name="Glasner J.D."/>
            <person name="Rode C.K."/>
            <person name="Mayhew G.F."/>
            <person name="Gregor J."/>
            <person name="Davis N.W."/>
            <person name="Kirkpatrick H.A."/>
            <person name="Goeden M.A."/>
            <person name="Rose D.J."/>
            <person name="Mau B."/>
            <person name="Shao Y."/>
        </authorList>
    </citation>
    <scope>NUCLEOTIDE SEQUENCE [LARGE SCALE GENOMIC DNA]</scope>
    <source>
        <strain>K12 / MG1655 / ATCC 47076</strain>
    </source>
</reference>
<reference key="2">
    <citation type="journal article" date="2006" name="Mol. Syst. Biol.">
        <title>Highly accurate genome sequences of Escherichia coli K-12 strains MG1655 and W3110.</title>
        <authorList>
            <person name="Hayashi K."/>
            <person name="Morooka N."/>
            <person name="Yamamoto Y."/>
            <person name="Fujita K."/>
            <person name="Isono K."/>
            <person name="Choi S."/>
            <person name="Ohtsubo E."/>
            <person name="Baba T."/>
            <person name="Wanner B.L."/>
            <person name="Mori H."/>
            <person name="Horiuchi T."/>
        </authorList>
    </citation>
    <scope>NUCLEOTIDE SEQUENCE [LARGE SCALE GENOMIC DNA]</scope>
    <source>
        <strain>K12 / W3110 / ATCC 27325 / DSM 5911</strain>
    </source>
</reference>
<accession>P65292</accession>
<accession>Q2MA25</accession>
<accession>Q46924</accession>
<gene>
    <name type="primary">ygdI</name>
    <name type="ordered locus">b2809</name>
    <name type="ordered locus">JW5448</name>
</gene>
<evidence type="ECO:0000255" key="1">
    <source>
        <dbReference type="PROSITE-ProRule" id="PRU00303"/>
    </source>
</evidence>
<evidence type="ECO:0000305" key="2"/>
<proteinExistence type="inferred from homology"/>
<organism>
    <name type="scientific">Escherichia coli (strain K12)</name>
    <dbReference type="NCBI Taxonomy" id="83333"/>
    <lineage>
        <taxon>Bacteria</taxon>
        <taxon>Pseudomonadati</taxon>
        <taxon>Pseudomonadota</taxon>
        <taxon>Gammaproteobacteria</taxon>
        <taxon>Enterobacterales</taxon>
        <taxon>Enterobacteriaceae</taxon>
        <taxon>Escherichia</taxon>
    </lineage>
</organism>
<comment type="subcellular location">
    <subcellularLocation>
        <location evidence="1">Cell membrane</location>
        <topology evidence="1">Lipid-anchor</topology>
    </subcellularLocation>
</comment>
<comment type="similarity">
    <text evidence="2">To E.coli YgdR.</text>
</comment>
<comment type="sequence caution" evidence="2">
    <conflict type="erroneous initiation">
        <sequence resource="EMBL-CDS" id="AAB40459"/>
    </conflict>
    <text>Extended N-terminus.</text>
</comment>
<feature type="signal peptide" evidence="1">
    <location>
        <begin position="1"/>
        <end position="19"/>
    </location>
</feature>
<feature type="chain" id="PRO_0000018048" description="Uncharacterized lipoprotein YgdI">
    <location>
        <begin position="20"/>
        <end position="75"/>
    </location>
</feature>
<feature type="lipid moiety-binding region" description="N-palmitoyl cysteine" evidence="1">
    <location>
        <position position="20"/>
    </location>
</feature>
<feature type="lipid moiety-binding region" description="S-diacylglycerol cysteine" evidence="1">
    <location>
        <position position="20"/>
    </location>
</feature>
<sequence length="75" mass="8174">MKKTAAIISACMLTFALSACSGSNYVMHTNDGRTIVSDGKPQTDNDTGMISYKDANGNKQQINRTDVKEMVELDQ</sequence>